<proteinExistence type="evidence at protein level"/>
<keyword id="KW-0002">3D-structure</keyword>
<keyword id="KW-1283">Bacterial microcompartment</keyword>
<keyword id="KW-0120">Carbon dioxide fixation</keyword>
<keyword id="KW-1282">Carboxysome</keyword>
<keyword id="KW-0602">Photosynthesis</keyword>
<keyword id="KW-1185">Reference proteome</keyword>
<evidence type="ECO:0000255" key="1">
    <source>
        <dbReference type="HAMAP-Rule" id="MF_00854"/>
    </source>
</evidence>
<evidence type="ECO:0000269" key="2">
    <source>
    </source>
</evidence>
<evidence type="ECO:0000303" key="3">
    <source>
    </source>
</evidence>
<evidence type="ECO:0000305" key="4">
    <source>
    </source>
</evidence>
<evidence type="ECO:0007744" key="5">
    <source>
        <dbReference type="PDB" id="3SSS"/>
    </source>
</evidence>
<evidence type="ECO:0007829" key="6">
    <source>
        <dbReference type="PDB" id="3SSS"/>
    </source>
</evidence>
<organism>
    <name type="scientific">Thermosynechococcus vestitus (strain NIES-2133 / IAM M-273 / BP-1)</name>
    <dbReference type="NCBI Taxonomy" id="197221"/>
    <lineage>
        <taxon>Bacteria</taxon>
        <taxon>Bacillati</taxon>
        <taxon>Cyanobacteriota</taxon>
        <taxon>Cyanophyceae</taxon>
        <taxon>Acaryochloridales</taxon>
        <taxon>Thermosynechococcaceae</taxon>
        <taxon>Thermosynechococcus</taxon>
    </lineage>
</organism>
<comment type="function">
    <text evidence="1 4">One of the shell proteins of the carboxysome, a polyhedral inclusion where RuBisCO (ribulose bisphosphate carboxylase, rbcL-rbcS) is sequestered. Assembles into hexamers which make sheets that form the facets of the polyhedral carboxysome. The hexamer central pore probably regulates metabolite flux.</text>
</comment>
<comment type="subunit">
    <text evidence="2">Homohexamer. Interacts preferentially with CcmK2 and CcmK4a rather than itself in vitro.</text>
</comment>
<comment type="interaction">
    <interactant intactId="EBI-15992989">
        <id>Q8DKB3</id>
    </interactant>
    <interactant intactId="EBI-15992989">
        <id>Q8DKB3</id>
        <label>ccmK1</label>
    </interactant>
    <organismsDiffer>false</organismsDiffer>
    <experiments>2</experiments>
</comment>
<comment type="interaction">
    <interactant intactId="EBI-15992989">
        <id>Q8DKB3</id>
    </interactant>
    <interactant intactId="EBI-15992959">
        <id>Q8DKB2</id>
        <label>ccmK2</label>
    </interactant>
    <organismsDiffer>false</organismsDiffer>
    <experiments>2</experiments>
</comment>
<comment type="subcellular location">
    <subcellularLocation>
        <location evidence="1 4">Carboxysome</location>
    </subcellularLocation>
    <text evidence="2">This cyanobacterium makes beta-type carboxysomes.</text>
</comment>
<comment type="domain">
    <text evidence="1 2">The tight homohexamer forms a small pore which is positively charged.</text>
</comment>
<comment type="similarity">
    <text evidence="1">Belongs to the bacterial microcompartments protein family. CcmK subfamily.</text>
</comment>
<sequence>MAIAVGMIETLGFPAVVEAADAMVKAARVTLVGYEKIGSGRVTVIVRGDVSEVQASVAAGVENVKRVNGGQVLSTHIIARPHENLEYVLPIRYTEAVEQFRESVSGIRPMGRP</sequence>
<gene>
    <name evidence="1 3" type="primary">ccmK1</name>
    <name type="ordered locus">tll0946</name>
</gene>
<accession>Q8DKB3</accession>
<name>CCMK1_THEVB</name>
<protein>
    <recommendedName>
        <fullName evidence="1 3">Carboxysome shell protein CcmK1</fullName>
    </recommendedName>
    <alternativeName>
        <fullName evidence="1">Carbon dioxide-concentrating mechanism protein CcmK1</fullName>
    </alternativeName>
</protein>
<feature type="chain" id="PRO_0000451239" description="Carboxysome shell protein CcmK1">
    <location>
        <begin position="1"/>
        <end position="113"/>
    </location>
</feature>
<feature type="domain" description="BMC" evidence="1">
    <location>
        <begin position="4"/>
        <end position="90"/>
    </location>
</feature>
<feature type="strand" evidence="6">
    <location>
        <begin position="4"/>
        <end position="12"/>
    </location>
</feature>
<feature type="helix" evidence="6">
    <location>
        <begin position="13"/>
        <end position="26"/>
    </location>
</feature>
<feature type="strand" evidence="6">
    <location>
        <begin position="30"/>
        <end position="36"/>
    </location>
</feature>
<feature type="strand" evidence="6">
    <location>
        <begin position="41"/>
        <end position="48"/>
    </location>
</feature>
<feature type="helix" evidence="6">
    <location>
        <begin position="50"/>
        <end position="64"/>
    </location>
</feature>
<feature type="strand" evidence="6">
    <location>
        <begin position="72"/>
        <end position="80"/>
    </location>
</feature>
<feature type="helix" evidence="6">
    <location>
        <begin position="83"/>
        <end position="87"/>
    </location>
</feature>
<feature type="helix" evidence="6">
    <location>
        <begin position="95"/>
        <end position="97"/>
    </location>
</feature>
<feature type="helix" evidence="6">
    <location>
        <begin position="98"/>
        <end position="101"/>
    </location>
</feature>
<dbReference type="EMBL" id="BA000039">
    <property type="protein sequence ID" value="BAC08498.1"/>
    <property type="molecule type" value="Genomic_DNA"/>
</dbReference>
<dbReference type="RefSeq" id="NP_681736.1">
    <property type="nucleotide sequence ID" value="NC_004113.1"/>
</dbReference>
<dbReference type="RefSeq" id="WP_011056790.1">
    <property type="nucleotide sequence ID" value="NC_004113.1"/>
</dbReference>
<dbReference type="PDB" id="3SSS">
    <property type="method" value="X-ray"/>
    <property type="resolution" value="2.05 A"/>
    <property type="chains" value="A/B/C/D/E/F=1-102"/>
</dbReference>
<dbReference type="PDBsum" id="3SSS"/>
<dbReference type="SMR" id="Q8DKB3"/>
<dbReference type="DIP" id="DIP-59853N"/>
<dbReference type="IntAct" id="Q8DKB3">
    <property type="interactions" value="2"/>
</dbReference>
<dbReference type="STRING" id="197221.gene:10747538"/>
<dbReference type="EnsemblBacteria" id="BAC08498">
    <property type="protein sequence ID" value="BAC08498"/>
    <property type="gene ID" value="BAC08498"/>
</dbReference>
<dbReference type="KEGG" id="tel:tll0946"/>
<dbReference type="PATRIC" id="fig|197221.4.peg.993"/>
<dbReference type="eggNOG" id="COG4577">
    <property type="taxonomic scope" value="Bacteria"/>
</dbReference>
<dbReference type="EvolutionaryTrace" id="Q8DKB3"/>
<dbReference type="Proteomes" id="UP000000440">
    <property type="component" value="Chromosome"/>
</dbReference>
<dbReference type="GO" id="GO:0031470">
    <property type="term" value="C:carboxysome"/>
    <property type="evidence" value="ECO:0007669"/>
    <property type="project" value="UniProtKB-SubCell"/>
</dbReference>
<dbReference type="GO" id="GO:0042802">
    <property type="term" value="F:identical protein binding"/>
    <property type="evidence" value="ECO:0000353"/>
    <property type="project" value="IntAct"/>
</dbReference>
<dbReference type="GO" id="GO:0043886">
    <property type="term" value="F:structural constituent of carboxysome shell"/>
    <property type="evidence" value="ECO:0007669"/>
    <property type="project" value="UniProtKB-UniRule"/>
</dbReference>
<dbReference type="GO" id="GO:0015977">
    <property type="term" value="P:carbon fixation"/>
    <property type="evidence" value="ECO:0007669"/>
    <property type="project" value="UniProtKB-UniRule"/>
</dbReference>
<dbReference type="GO" id="GO:0015979">
    <property type="term" value="P:photosynthesis"/>
    <property type="evidence" value="ECO:0007669"/>
    <property type="project" value="UniProtKB-KW"/>
</dbReference>
<dbReference type="CDD" id="cd07057">
    <property type="entry name" value="BMC_CcmK"/>
    <property type="match status" value="1"/>
</dbReference>
<dbReference type="FunFam" id="3.30.70.1710:FF:000001">
    <property type="entry name" value="Ethanolamine utilization protein EutM"/>
    <property type="match status" value="1"/>
</dbReference>
<dbReference type="Gene3D" id="3.30.70.1710">
    <property type="match status" value="1"/>
</dbReference>
<dbReference type="HAMAP" id="MF_00854">
    <property type="entry name" value="CcmK"/>
    <property type="match status" value="1"/>
</dbReference>
<dbReference type="InterPro" id="IPR020808">
    <property type="entry name" value="Bact_microcomp_CS"/>
</dbReference>
<dbReference type="InterPro" id="IPR000249">
    <property type="entry name" value="BMC_dom"/>
</dbReference>
<dbReference type="InterPro" id="IPR050575">
    <property type="entry name" value="BMC_shell"/>
</dbReference>
<dbReference type="InterPro" id="IPR046380">
    <property type="entry name" value="CcmK"/>
</dbReference>
<dbReference type="InterPro" id="IPR037233">
    <property type="entry name" value="CcmK-like_sf"/>
</dbReference>
<dbReference type="InterPro" id="IPR044872">
    <property type="entry name" value="CcmK/CsoS1_BMC"/>
</dbReference>
<dbReference type="PANTHER" id="PTHR33941:SF13">
    <property type="entry name" value="CARBOXYSOME SHELL PROTEIN CCMK4"/>
    <property type="match status" value="1"/>
</dbReference>
<dbReference type="PANTHER" id="PTHR33941">
    <property type="entry name" value="PROPANEDIOL UTILIZATION PROTEIN PDUA"/>
    <property type="match status" value="1"/>
</dbReference>
<dbReference type="Pfam" id="PF00936">
    <property type="entry name" value="BMC"/>
    <property type="match status" value="1"/>
</dbReference>
<dbReference type="SMART" id="SM00877">
    <property type="entry name" value="BMC"/>
    <property type="match status" value="1"/>
</dbReference>
<dbReference type="SUPFAM" id="SSF143414">
    <property type="entry name" value="CcmK-like"/>
    <property type="match status" value="1"/>
</dbReference>
<dbReference type="PROSITE" id="PS01139">
    <property type="entry name" value="BMC_1"/>
    <property type="match status" value="1"/>
</dbReference>
<dbReference type="PROSITE" id="PS51930">
    <property type="entry name" value="BMC_2"/>
    <property type="match status" value="1"/>
</dbReference>
<reference key="1">
    <citation type="journal article" date="2002" name="DNA Res.">
        <title>Complete genome structure of the thermophilic cyanobacterium Thermosynechococcus elongatus BP-1.</title>
        <authorList>
            <person name="Nakamura Y."/>
            <person name="Kaneko T."/>
            <person name="Sato S."/>
            <person name="Ikeuchi M."/>
            <person name="Katoh H."/>
            <person name="Sasamoto S."/>
            <person name="Watanabe A."/>
            <person name="Iriguchi M."/>
            <person name="Kawashima K."/>
            <person name="Kimura T."/>
            <person name="Kishida Y."/>
            <person name="Kiyokawa C."/>
            <person name="Kohara M."/>
            <person name="Matsumoto M."/>
            <person name="Matsuno A."/>
            <person name="Nakazaki N."/>
            <person name="Shimpo S."/>
            <person name="Sugimoto M."/>
            <person name="Takeuchi C."/>
            <person name="Yamada M."/>
            <person name="Tabata S."/>
        </authorList>
    </citation>
    <scope>NUCLEOTIDE SEQUENCE [LARGE SCALE GENOMIC DNA]</scope>
    <source>
        <strain>NIES-2133 / IAM M-273 / BP-1</strain>
    </source>
</reference>
<reference evidence="5" key="2">
    <citation type="journal article" date="2012" name="Structure">
        <title>A dodecameric CcmK2 structure suggests beta-carboxysomal shell facets have a double-layered organization.</title>
        <authorList>
            <person name="Samborska B."/>
            <person name="Kimber M.S."/>
        </authorList>
    </citation>
    <scope>X-RAY CRYSTALLOGRAPHY (2.05 ANGSTROMS) OF 1-102</scope>
    <scope>SUBUNIT</scope>
    <scope>DOMAIN</scope>
    <source>
        <strain>NIES-2133 / IAM M-273 / BP-1</strain>
    </source>
</reference>